<evidence type="ECO:0000255" key="1">
    <source>
        <dbReference type="HAMAP-Rule" id="MF_00479"/>
    </source>
</evidence>
<gene>
    <name evidence="1" type="primary">rnfG</name>
    <name type="ordered locus">ETA_17780</name>
</gene>
<accession>B2VEQ5</accession>
<feature type="chain" id="PRO_1000125873" description="Ion-translocating oxidoreductase complex subunit G">
    <location>
        <begin position="1"/>
        <end position="210"/>
    </location>
</feature>
<feature type="transmembrane region" description="Helical" evidence="1">
    <location>
        <begin position="9"/>
        <end position="29"/>
    </location>
</feature>
<feature type="modified residue" description="FMN phosphoryl threonine" evidence="1">
    <location>
        <position position="175"/>
    </location>
</feature>
<sequence length="210" mass="22613">MLDAIRKNGVTLAVFAAITTGLTAVINAVTKPTIEHQTAVQQKILLDQVVPPELYNNRIQDECYSVTDPALGNTNPHHLYLARKDDKPVAVALETTAPDGYSGNIQMIVGASFDGIVYGTRVVEHHETPGLGDKIELRISDWINSFNGKKVNGPSDGHFAVKKDGGDFDQFTGATITPRAVVNAVKRTTLYIETLPGQLSSLPTCGDANE</sequence>
<dbReference type="EC" id="7.-.-.-" evidence="1"/>
<dbReference type="EMBL" id="CU468135">
    <property type="protein sequence ID" value="CAO96824.1"/>
    <property type="molecule type" value="Genomic_DNA"/>
</dbReference>
<dbReference type="RefSeq" id="WP_012441513.1">
    <property type="nucleotide sequence ID" value="NC_010694.1"/>
</dbReference>
<dbReference type="SMR" id="B2VEQ5"/>
<dbReference type="STRING" id="465817.ETA_17780"/>
<dbReference type="KEGG" id="eta:ETA_17780"/>
<dbReference type="eggNOG" id="COG4659">
    <property type="taxonomic scope" value="Bacteria"/>
</dbReference>
<dbReference type="HOGENOM" id="CLU_077882_1_0_6"/>
<dbReference type="OrthoDB" id="9784165at2"/>
<dbReference type="Proteomes" id="UP000001726">
    <property type="component" value="Chromosome"/>
</dbReference>
<dbReference type="GO" id="GO:0005886">
    <property type="term" value="C:plasma membrane"/>
    <property type="evidence" value="ECO:0007669"/>
    <property type="project" value="UniProtKB-SubCell"/>
</dbReference>
<dbReference type="GO" id="GO:0009055">
    <property type="term" value="F:electron transfer activity"/>
    <property type="evidence" value="ECO:0007669"/>
    <property type="project" value="InterPro"/>
</dbReference>
<dbReference type="GO" id="GO:0010181">
    <property type="term" value="F:FMN binding"/>
    <property type="evidence" value="ECO:0007669"/>
    <property type="project" value="InterPro"/>
</dbReference>
<dbReference type="GO" id="GO:0022900">
    <property type="term" value="P:electron transport chain"/>
    <property type="evidence" value="ECO:0007669"/>
    <property type="project" value="UniProtKB-UniRule"/>
</dbReference>
<dbReference type="HAMAP" id="MF_00479">
    <property type="entry name" value="RsxG_RnfG"/>
    <property type="match status" value="1"/>
</dbReference>
<dbReference type="InterPro" id="IPR007329">
    <property type="entry name" value="FMN-bd"/>
</dbReference>
<dbReference type="InterPro" id="IPR010209">
    <property type="entry name" value="Ion_transpt_RnfG/RsxG"/>
</dbReference>
<dbReference type="NCBIfam" id="NF002519">
    <property type="entry name" value="PRK01908.1"/>
    <property type="match status" value="1"/>
</dbReference>
<dbReference type="NCBIfam" id="TIGR01947">
    <property type="entry name" value="rnfG"/>
    <property type="match status" value="1"/>
</dbReference>
<dbReference type="PANTHER" id="PTHR36118">
    <property type="entry name" value="ION-TRANSLOCATING OXIDOREDUCTASE COMPLEX SUBUNIT G"/>
    <property type="match status" value="1"/>
</dbReference>
<dbReference type="PANTHER" id="PTHR36118:SF1">
    <property type="entry name" value="ION-TRANSLOCATING OXIDOREDUCTASE COMPLEX SUBUNIT G"/>
    <property type="match status" value="1"/>
</dbReference>
<dbReference type="Pfam" id="PF04205">
    <property type="entry name" value="FMN_bind"/>
    <property type="match status" value="1"/>
</dbReference>
<dbReference type="PIRSF" id="PIRSF006091">
    <property type="entry name" value="E_trnsport_RnfG"/>
    <property type="match status" value="1"/>
</dbReference>
<dbReference type="SMART" id="SM00900">
    <property type="entry name" value="FMN_bind"/>
    <property type="match status" value="1"/>
</dbReference>
<name>RNFG_ERWT9</name>
<organism>
    <name type="scientific">Erwinia tasmaniensis (strain DSM 17950 / CFBP 7177 / CIP 109463 / NCPPB 4357 / Et1/99)</name>
    <dbReference type="NCBI Taxonomy" id="465817"/>
    <lineage>
        <taxon>Bacteria</taxon>
        <taxon>Pseudomonadati</taxon>
        <taxon>Pseudomonadota</taxon>
        <taxon>Gammaproteobacteria</taxon>
        <taxon>Enterobacterales</taxon>
        <taxon>Erwiniaceae</taxon>
        <taxon>Erwinia</taxon>
    </lineage>
</organism>
<proteinExistence type="inferred from homology"/>
<protein>
    <recommendedName>
        <fullName evidence="1">Ion-translocating oxidoreductase complex subunit G</fullName>
        <ecNumber evidence="1">7.-.-.-</ecNumber>
    </recommendedName>
    <alternativeName>
        <fullName evidence="1">Rnf electron transport complex subunit G</fullName>
    </alternativeName>
</protein>
<keyword id="KW-0997">Cell inner membrane</keyword>
<keyword id="KW-1003">Cell membrane</keyword>
<keyword id="KW-0249">Electron transport</keyword>
<keyword id="KW-0285">Flavoprotein</keyword>
<keyword id="KW-0288">FMN</keyword>
<keyword id="KW-0472">Membrane</keyword>
<keyword id="KW-0597">Phosphoprotein</keyword>
<keyword id="KW-1185">Reference proteome</keyword>
<keyword id="KW-1278">Translocase</keyword>
<keyword id="KW-0812">Transmembrane</keyword>
<keyword id="KW-1133">Transmembrane helix</keyword>
<keyword id="KW-0813">Transport</keyword>
<reference key="1">
    <citation type="journal article" date="2008" name="Environ. Microbiol.">
        <title>The genome of Erwinia tasmaniensis strain Et1/99, a non-pathogenic bacterium in the genus Erwinia.</title>
        <authorList>
            <person name="Kube M."/>
            <person name="Migdoll A.M."/>
            <person name="Mueller I."/>
            <person name="Kuhl H."/>
            <person name="Beck A."/>
            <person name="Reinhardt R."/>
            <person name="Geider K."/>
        </authorList>
    </citation>
    <scope>NUCLEOTIDE SEQUENCE [LARGE SCALE GENOMIC DNA]</scope>
    <source>
        <strain>DSM 17950 / CFBP 7177 / CIP 109463 / NCPPB 4357 / Et1/99</strain>
    </source>
</reference>
<comment type="function">
    <text evidence="1">Part of a membrane-bound complex that couples electron transfer with translocation of ions across the membrane.</text>
</comment>
<comment type="cofactor">
    <cofactor evidence="1">
        <name>FMN</name>
        <dbReference type="ChEBI" id="CHEBI:58210"/>
    </cofactor>
</comment>
<comment type="subunit">
    <text evidence="1">The complex is composed of six subunits: RnfA, RnfB, RnfC, RnfD, RnfE and RnfG.</text>
</comment>
<comment type="subcellular location">
    <subcellularLocation>
        <location evidence="1">Cell inner membrane</location>
        <topology evidence="1">Single-pass membrane protein</topology>
    </subcellularLocation>
</comment>
<comment type="similarity">
    <text evidence="1">Belongs to the RnfG family.</text>
</comment>